<sequence>MEDYIILSKCGQGTYGSVFKGIHKITHSLVALKRVTDIAQEDGEPVEVKYLNQLKNLSNIVNLRDHFYIDKNSVLVLIMEFIEGDLWKIMSNPQCTLSLGQIKNFTKQLLEGVKQCHVNGIMHRDIKPANLLITTNGVLKLTDFGLSTSYSKRSEKFLSSNVVSLYYRPPELLLGSCIYGPEIDMWSVGCILMEMINNSYLFAGADETAQLDLIFKLFGCPTEKSWPGVSSLPGYNDLFNKQQQQQQNENNYSKQHNNNNNNNNNNNNNNNNNNNNNNNNNNNNNNKYNNISTSCLQSPSSSPPIGGYASSLSSDFNSNEYNGYNQTFSNEDCLAISQKKLIDKFPHLVLLPSVLDLASKMLTLDPKKRINSLEALEHPWFKSSNDMDQIVPFSKDFTDLANRYIASTRQLQQQQHHHQQQQQQQQQQQQQQQPHQQQLIQRQHQEQQQQQLIQRQQEQSKQQLIQHHQQSVNQQQLAQQQQLAQHQQYNSQQHQQHHQQQHQQHQQHQQQQQQQQQQQQQQQQQQQQQQQQQQQQQQQYHQHQQQYHQYQQQYHQPSQQQQQQQQQQQQQQQQQQQQQQQQQQQQQQQQQQQQQQQQQQHQYQPPQQYNHQPPQHQHQHQHQHQHQHQHQHQPQPQHQHQPQPQPQPTPTPTPTSTPTTTTIPPTITTTIQPTISKSNG</sequence>
<name>Y4007_DICDI</name>
<proteinExistence type="inferred from homology"/>
<accession>Q556J6</accession>
<accession>Q86AM9</accession>
<protein>
    <recommendedName>
        <fullName>Putative cyclin-dependent serine/threonine-protein kinase DDB_G0272797/DDB_G0274007</fullName>
        <ecNumber>2.7.11.22</ecNumber>
    </recommendedName>
</protein>
<evidence type="ECO:0000255" key="1">
    <source>
        <dbReference type="PROSITE-ProRule" id="PRU00159"/>
    </source>
</evidence>
<evidence type="ECO:0000255" key="2">
    <source>
        <dbReference type="PROSITE-ProRule" id="PRU10027"/>
    </source>
</evidence>
<evidence type="ECO:0000256" key="3">
    <source>
        <dbReference type="SAM" id="MobiDB-lite"/>
    </source>
</evidence>
<evidence type="ECO:0000305" key="4"/>
<dbReference type="EC" id="2.7.11.22"/>
<dbReference type="EMBL" id="AAFI02000011">
    <property type="protein sequence ID" value="EAL70437.1"/>
    <property type="molecule type" value="Genomic_DNA"/>
</dbReference>
<dbReference type="EMBL" id="AAFI02000009">
    <property type="protein sequence ID" value="EAL71036.1"/>
    <property type="molecule type" value="Genomic_DNA"/>
</dbReference>
<dbReference type="RefSeq" id="XP_644362.1">
    <property type="nucleotide sequence ID" value="XM_639270.1"/>
</dbReference>
<dbReference type="RefSeq" id="XP_645052.1">
    <property type="nucleotide sequence ID" value="XM_639960.1"/>
</dbReference>
<dbReference type="SMR" id="Q556J6"/>
<dbReference type="STRING" id="44689.Q556J6"/>
<dbReference type="GlyGen" id="Q556J6">
    <property type="glycosylation" value="3 sites"/>
</dbReference>
<dbReference type="PaxDb" id="44689-DDB0230050"/>
<dbReference type="EnsemblProtists" id="EAL70437">
    <property type="protein sequence ID" value="EAL70437"/>
    <property type="gene ID" value="DDB_G0274007"/>
</dbReference>
<dbReference type="EnsemblProtists" id="EAL71036">
    <property type="protein sequence ID" value="EAL71036"/>
    <property type="gene ID" value="DDB_G0272797"/>
</dbReference>
<dbReference type="GeneID" id="8618728"/>
<dbReference type="GeneID" id="8619248"/>
<dbReference type="KEGG" id="ddi:DDB_G0272797"/>
<dbReference type="KEGG" id="ddi:DDB_G0274007"/>
<dbReference type="dictyBase" id="DDB_G0272797"/>
<dbReference type="dictyBase" id="DDB_G0274007"/>
<dbReference type="VEuPathDB" id="AmoebaDB:DDB_G0274007"/>
<dbReference type="eggNOG" id="KOG0594">
    <property type="taxonomic scope" value="Eukaryota"/>
</dbReference>
<dbReference type="HOGENOM" id="CLU_404632_0_0_1"/>
<dbReference type="InParanoid" id="Q556J6"/>
<dbReference type="OMA" id="QNRMMIQ"/>
<dbReference type="PhylomeDB" id="Q556J6"/>
<dbReference type="PRO" id="PR:Q556J6"/>
<dbReference type="Proteomes" id="UP000002195">
    <property type="component" value="Chromosome 2"/>
</dbReference>
<dbReference type="GO" id="GO:0005737">
    <property type="term" value="C:cytoplasm"/>
    <property type="evidence" value="ECO:0000318"/>
    <property type="project" value="GO_Central"/>
</dbReference>
<dbReference type="GO" id="GO:0005634">
    <property type="term" value="C:nucleus"/>
    <property type="evidence" value="ECO:0000318"/>
    <property type="project" value="GO_Central"/>
</dbReference>
<dbReference type="GO" id="GO:0005524">
    <property type="term" value="F:ATP binding"/>
    <property type="evidence" value="ECO:0007669"/>
    <property type="project" value="UniProtKB-KW"/>
</dbReference>
<dbReference type="GO" id="GO:0004693">
    <property type="term" value="F:cyclin-dependent protein serine/threonine kinase activity"/>
    <property type="evidence" value="ECO:0000318"/>
    <property type="project" value="GO_Central"/>
</dbReference>
<dbReference type="GO" id="GO:0106310">
    <property type="term" value="F:protein serine kinase activity"/>
    <property type="evidence" value="ECO:0007669"/>
    <property type="project" value="RHEA"/>
</dbReference>
<dbReference type="GO" id="GO:1901987">
    <property type="term" value="P:regulation of cell cycle phase transition"/>
    <property type="evidence" value="ECO:0000318"/>
    <property type="project" value="GO_Central"/>
</dbReference>
<dbReference type="FunFam" id="1.10.510.10:FF:001022">
    <property type="entry name" value="Cyclin-dependent kinase C-1, putative"/>
    <property type="match status" value="1"/>
</dbReference>
<dbReference type="FunFam" id="3.30.200.20:FF:000664">
    <property type="entry name" value="Cyclin-dependent kinase F-1"/>
    <property type="match status" value="1"/>
</dbReference>
<dbReference type="Gene3D" id="3.30.200.20">
    <property type="entry name" value="Phosphorylase Kinase, domain 1"/>
    <property type="match status" value="1"/>
</dbReference>
<dbReference type="Gene3D" id="1.10.510.10">
    <property type="entry name" value="Transferase(Phosphotransferase) domain 1"/>
    <property type="match status" value="2"/>
</dbReference>
<dbReference type="InterPro" id="IPR050108">
    <property type="entry name" value="CDK"/>
</dbReference>
<dbReference type="InterPro" id="IPR011009">
    <property type="entry name" value="Kinase-like_dom_sf"/>
</dbReference>
<dbReference type="InterPro" id="IPR000719">
    <property type="entry name" value="Prot_kinase_dom"/>
</dbReference>
<dbReference type="InterPro" id="IPR008271">
    <property type="entry name" value="Ser/Thr_kinase_AS"/>
</dbReference>
<dbReference type="PANTHER" id="PTHR24056">
    <property type="entry name" value="CELL DIVISION PROTEIN KINASE"/>
    <property type="match status" value="1"/>
</dbReference>
<dbReference type="PANTHER" id="PTHR24056:SF246">
    <property type="entry name" value="ECDYSONE-INDUCED PROTEIN 63E, ISOFORM N"/>
    <property type="match status" value="1"/>
</dbReference>
<dbReference type="Pfam" id="PF00069">
    <property type="entry name" value="Pkinase"/>
    <property type="match status" value="1"/>
</dbReference>
<dbReference type="SMART" id="SM00220">
    <property type="entry name" value="S_TKc"/>
    <property type="match status" value="1"/>
</dbReference>
<dbReference type="SUPFAM" id="SSF56112">
    <property type="entry name" value="Protein kinase-like (PK-like)"/>
    <property type="match status" value="1"/>
</dbReference>
<dbReference type="PROSITE" id="PS50011">
    <property type="entry name" value="PROTEIN_KINASE_DOM"/>
    <property type="match status" value="1"/>
</dbReference>
<dbReference type="PROSITE" id="PS00108">
    <property type="entry name" value="PROTEIN_KINASE_ST"/>
    <property type="match status" value="1"/>
</dbReference>
<organism>
    <name type="scientific">Dictyostelium discoideum</name>
    <name type="common">Social amoeba</name>
    <dbReference type="NCBI Taxonomy" id="44689"/>
    <lineage>
        <taxon>Eukaryota</taxon>
        <taxon>Amoebozoa</taxon>
        <taxon>Evosea</taxon>
        <taxon>Eumycetozoa</taxon>
        <taxon>Dictyostelia</taxon>
        <taxon>Dictyosteliales</taxon>
        <taxon>Dictyosteliaceae</taxon>
        <taxon>Dictyostelium</taxon>
    </lineage>
</organism>
<feature type="chain" id="PRO_0000372696" description="Putative cyclin-dependent serine/threonine-protein kinase DDB_G0272797/DDB_G0274007">
    <location>
        <begin position="1"/>
        <end position="680"/>
    </location>
</feature>
<feature type="domain" description="Protein kinase" evidence="1">
    <location>
        <begin position="4"/>
        <end position="381"/>
    </location>
</feature>
<feature type="region of interest" description="Disordered" evidence="3">
    <location>
        <begin position="243"/>
        <end position="299"/>
    </location>
</feature>
<feature type="region of interest" description="Disordered" evidence="3">
    <location>
        <begin position="409"/>
        <end position="444"/>
    </location>
</feature>
<feature type="region of interest" description="Disordered" evidence="3">
    <location>
        <begin position="483"/>
        <end position="507"/>
    </location>
</feature>
<feature type="region of interest" description="Disordered" evidence="3">
    <location>
        <begin position="597"/>
        <end position="680"/>
    </location>
</feature>
<feature type="compositionally biased region" description="Low complexity" evidence="3">
    <location>
        <begin position="257"/>
        <end position="286"/>
    </location>
</feature>
<feature type="compositionally biased region" description="Polar residues" evidence="3">
    <location>
        <begin position="287"/>
        <end position="297"/>
    </location>
</feature>
<feature type="compositionally biased region" description="Low complexity" evidence="3">
    <location>
        <begin position="410"/>
        <end position="444"/>
    </location>
</feature>
<feature type="compositionally biased region" description="Low complexity" evidence="3">
    <location>
        <begin position="483"/>
        <end position="494"/>
    </location>
</feature>
<feature type="compositionally biased region" description="Low complexity" evidence="3">
    <location>
        <begin position="597"/>
        <end position="616"/>
    </location>
</feature>
<feature type="compositionally biased region" description="Basic residues" evidence="3">
    <location>
        <begin position="617"/>
        <end position="631"/>
    </location>
</feature>
<feature type="compositionally biased region" description="Low complexity" evidence="3">
    <location>
        <begin position="632"/>
        <end position="642"/>
    </location>
</feature>
<feature type="compositionally biased region" description="Pro residues" evidence="3">
    <location>
        <begin position="643"/>
        <end position="655"/>
    </location>
</feature>
<feature type="compositionally biased region" description="Low complexity" evidence="3">
    <location>
        <begin position="656"/>
        <end position="680"/>
    </location>
</feature>
<feature type="active site" description="Proton acceptor" evidence="1 2">
    <location>
        <position position="125"/>
    </location>
</feature>
<feature type="binding site" evidence="1">
    <location>
        <begin position="10"/>
        <end position="18"/>
    </location>
    <ligand>
        <name>ATP</name>
        <dbReference type="ChEBI" id="CHEBI:30616"/>
    </ligand>
</feature>
<feature type="binding site" evidence="1">
    <location>
        <position position="33"/>
    </location>
    <ligand>
        <name>ATP</name>
        <dbReference type="ChEBI" id="CHEBI:30616"/>
    </ligand>
</feature>
<reference key="1">
    <citation type="journal article" date="2002" name="Nature">
        <title>Sequence and analysis of chromosome 2 of Dictyostelium discoideum.</title>
        <authorList>
            <person name="Gloeckner G."/>
            <person name="Eichinger L."/>
            <person name="Szafranski K."/>
            <person name="Pachebat J.A."/>
            <person name="Bankier A.T."/>
            <person name="Dear P.H."/>
            <person name="Lehmann R."/>
            <person name="Baumgart C."/>
            <person name="Parra G."/>
            <person name="Abril J.F."/>
            <person name="Guigo R."/>
            <person name="Kumpf K."/>
            <person name="Tunggal B."/>
            <person name="Cox E.C."/>
            <person name="Quail M.A."/>
            <person name="Platzer M."/>
            <person name="Rosenthal A."/>
            <person name="Noegel A.A."/>
        </authorList>
    </citation>
    <scope>NUCLEOTIDE SEQUENCE [LARGE SCALE GENOMIC DNA]</scope>
    <source>
        <strain>AX4</strain>
    </source>
</reference>
<reference key="2">
    <citation type="journal article" date="2005" name="Nature">
        <title>The genome of the social amoeba Dictyostelium discoideum.</title>
        <authorList>
            <person name="Eichinger L."/>
            <person name="Pachebat J.A."/>
            <person name="Gloeckner G."/>
            <person name="Rajandream M.A."/>
            <person name="Sucgang R."/>
            <person name="Berriman M."/>
            <person name="Song J."/>
            <person name="Olsen R."/>
            <person name="Szafranski K."/>
            <person name="Xu Q."/>
            <person name="Tunggal B."/>
            <person name="Kummerfeld S."/>
            <person name="Madera M."/>
            <person name="Konfortov B.A."/>
            <person name="Rivero F."/>
            <person name="Bankier A.T."/>
            <person name="Lehmann R."/>
            <person name="Hamlin N."/>
            <person name="Davies R."/>
            <person name="Gaudet P."/>
            <person name="Fey P."/>
            <person name="Pilcher K."/>
            <person name="Chen G."/>
            <person name="Saunders D."/>
            <person name="Sodergren E.J."/>
            <person name="Davis P."/>
            <person name="Kerhornou A."/>
            <person name="Nie X."/>
            <person name="Hall N."/>
            <person name="Anjard C."/>
            <person name="Hemphill L."/>
            <person name="Bason N."/>
            <person name="Farbrother P."/>
            <person name="Desany B."/>
            <person name="Just E."/>
            <person name="Morio T."/>
            <person name="Rost R."/>
            <person name="Churcher C.M."/>
            <person name="Cooper J."/>
            <person name="Haydock S."/>
            <person name="van Driessche N."/>
            <person name="Cronin A."/>
            <person name="Goodhead I."/>
            <person name="Muzny D.M."/>
            <person name="Mourier T."/>
            <person name="Pain A."/>
            <person name="Lu M."/>
            <person name="Harper D."/>
            <person name="Lindsay R."/>
            <person name="Hauser H."/>
            <person name="James K.D."/>
            <person name="Quiles M."/>
            <person name="Madan Babu M."/>
            <person name="Saito T."/>
            <person name="Buchrieser C."/>
            <person name="Wardroper A."/>
            <person name="Felder M."/>
            <person name="Thangavelu M."/>
            <person name="Johnson D."/>
            <person name="Knights A."/>
            <person name="Loulseged H."/>
            <person name="Mungall K.L."/>
            <person name="Oliver K."/>
            <person name="Price C."/>
            <person name="Quail M.A."/>
            <person name="Urushihara H."/>
            <person name="Hernandez J."/>
            <person name="Rabbinowitsch E."/>
            <person name="Steffen D."/>
            <person name="Sanders M."/>
            <person name="Ma J."/>
            <person name="Kohara Y."/>
            <person name="Sharp S."/>
            <person name="Simmonds M.N."/>
            <person name="Spiegler S."/>
            <person name="Tivey A."/>
            <person name="Sugano S."/>
            <person name="White B."/>
            <person name="Walker D."/>
            <person name="Woodward J.R."/>
            <person name="Winckler T."/>
            <person name="Tanaka Y."/>
            <person name="Shaulsky G."/>
            <person name="Schleicher M."/>
            <person name="Weinstock G.M."/>
            <person name="Rosenthal A."/>
            <person name="Cox E.C."/>
            <person name="Chisholm R.L."/>
            <person name="Gibbs R.A."/>
            <person name="Loomis W.F."/>
            <person name="Platzer M."/>
            <person name="Kay R.R."/>
            <person name="Williams J.G."/>
            <person name="Dear P.H."/>
            <person name="Noegel A.A."/>
            <person name="Barrell B.G."/>
            <person name="Kuspa A."/>
        </authorList>
    </citation>
    <scope>NUCLEOTIDE SEQUENCE [LARGE SCALE GENOMIC DNA]</scope>
    <source>
        <strain>AX4</strain>
    </source>
</reference>
<keyword id="KW-0067">ATP-binding</keyword>
<keyword id="KW-0418">Kinase</keyword>
<keyword id="KW-0547">Nucleotide-binding</keyword>
<keyword id="KW-1185">Reference proteome</keyword>
<keyword id="KW-0723">Serine/threonine-protein kinase</keyword>
<keyword id="KW-0808">Transferase</keyword>
<gene>
    <name type="ORF">DDB_G0272797</name>
</gene>
<gene>
    <name type="ORF">DDB_G0274007</name>
</gene>
<comment type="catalytic activity">
    <reaction>
        <text>L-seryl-[protein] + ATP = O-phospho-L-seryl-[protein] + ADP + H(+)</text>
        <dbReference type="Rhea" id="RHEA:17989"/>
        <dbReference type="Rhea" id="RHEA-COMP:9863"/>
        <dbReference type="Rhea" id="RHEA-COMP:11604"/>
        <dbReference type="ChEBI" id="CHEBI:15378"/>
        <dbReference type="ChEBI" id="CHEBI:29999"/>
        <dbReference type="ChEBI" id="CHEBI:30616"/>
        <dbReference type="ChEBI" id="CHEBI:83421"/>
        <dbReference type="ChEBI" id="CHEBI:456216"/>
        <dbReference type="EC" id="2.7.11.22"/>
    </reaction>
</comment>
<comment type="catalytic activity">
    <reaction>
        <text>L-threonyl-[protein] + ATP = O-phospho-L-threonyl-[protein] + ADP + H(+)</text>
        <dbReference type="Rhea" id="RHEA:46608"/>
        <dbReference type="Rhea" id="RHEA-COMP:11060"/>
        <dbReference type="Rhea" id="RHEA-COMP:11605"/>
        <dbReference type="ChEBI" id="CHEBI:15378"/>
        <dbReference type="ChEBI" id="CHEBI:30013"/>
        <dbReference type="ChEBI" id="CHEBI:30616"/>
        <dbReference type="ChEBI" id="CHEBI:61977"/>
        <dbReference type="ChEBI" id="CHEBI:456216"/>
        <dbReference type="EC" id="2.7.11.22"/>
    </reaction>
</comment>
<comment type="similarity">
    <text evidence="4">Belongs to the protein kinase superfamily. CMGC Ser/Thr protein kinase family. CDC2/CDKX subfamily.</text>
</comment>
<comment type="caution">
    <text evidence="4">The gene for this protein is duplicated in strains AX3 and AX4. These strains contain a duplication of a segment of 750 kb of chromosome 2 compared to the corresponding sequence in strain AX2.</text>
</comment>